<evidence type="ECO:0000255" key="1">
    <source>
        <dbReference type="HAMAP-Rule" id="MF_00612"/>
    </source>
</evidence>
<reference key="1">
    <citation type="journal article" date="2002" name="Nature">
        <title>Complete genome sequence of the model actinomycete Streptomyces coelicolor A3(2).</title>
        <authorList>
            <person name="Bentley S.D."/>
            <person name="Chater K.F."/>
            <person name="Cerdeno-Tarraga A.-M."/>
            <person name="Challis G.L."/>
            <person name="Thomson N.R."/>
            <person name="James K.D."/>
            <person name="Harris D.E."/>
            <person name="Quail M.A."/>
            <person name="Kieser H."/>
            <person name="Harper D."/>
            <person name="Bateman A."/>
            <person name="Brown S."/>
            <person name="Chandra G."/>
            <person name="Chen C.W."/>
            <person name="Collins M."/>
            <person name="Cronin A."/>
            <person name="Fraser A."/>
            <person name="Goble A."/>
            <person name="Hidalgo J."/>
            <person name="Hornsby T."/>
            <person name="Howarth S."/>
            <person name="Huang C.-H."/>
            <person name="Kieser T."/>
            <person name="Larke L."/>
            <person name="Murphy L.D."/>
            <person name="Oliver K."/>
            <person name="O'Neil S."/>
            <person name="Rabbinowitsch E."/>
            <person name="Rajandream M.A."/>
            <person name="Rutherford K.M."/>
            <person name="Rutter S."/>
            <person name="Seeger K."/>
            <person name="Saunders D."/>
            <person name="Sharp S."/>
            <person name="Squares R."/>
            <person name="Squares S."/>
            <person name="Taylor K."/>
            <person name="Warren T."/>
            <person name="Wietzorrek A."/>
            <person name="Woodward J.R."/>
            <person name="Barrell B.G."/>
            <person name="Parkhill J."/>
            <person name="Hopwood D.A."/>
        </authorList>
    </citation>
    <scope>NUCLEOTIDE SEQUENCE [LARGE SCALE GENOMIC DNA]</scope>
    <source>
        <strain>ATCC BAA-471 / A3(2) / M145</strain>
    </source>
</reference>
<organism>
    <name type="scientific">Streptomyces coelicolor (strain ATCC BAA-471 / A3(2) / M145)</name>
    <dbReference type="NCBI Taxonomy" id="100226"/>
    <lineage>
        <taxon>Bacteria</taxon>
        <taxon>Bacillati</taxon>
        <taxon>Actinomycetota</taxon>
        <taxon>Actinomycetes</taxon>
        <taxon>Kitasatosporales</taxon>
        <taxon>Streptomycetaceae</taxon>
        <taxon>Streptomyces</taxon>
        <taxon>Streptomyces albidoflavus group</taxon>
    </lineage>
</organism>
<dbReference type="EMBL" id="AL939109">
    <property type="protein sequence ID" value="CAC36380.1"/>
    <property type="molecule type" value="Genomic_DNA"/>
</dbReference>
<dbReference type="RefSeq" id="NP_625952.1">
    <property type="nucleotide sequence ID" value="NC_003888.3"/>
</dbReference>
<dbReference type="RefSeq" id="WP_011027912.1">
    <property type="nucleotide sequence ID" value="NZ_VNID01000018.1"/>
</dbReference>
<dbReference type="SMR" id="Q9AD90"/>
<dbReference type="STRING" id="100226.gene:17759271"/>
<dbReference type="PaxDb" id="100226-SCO1677"/>
<dbReference type="KEGG" id="sco:SCO1677"/>
<dbReference type="PATRIC" id="fig|100226.15.peg.1694"/>
<dbReference type="eggNOG" id="COG3012">
    <property type="taxonomic scope" value="Bacteria"/>
</dbReference>
<dbReference type="HOGENOM" id="CLU_099590_2_0_11"/>
<dbReference type="InParanoid" id="Q9AD90"/>
<dbReference type="OrthoDB" id="21421at2"/>
<dbReference type="PhylomeDB" id="Q9AD90"/>
<dbReference type="Proteomes" id="UP000001973">
    <property type="component" value="Chromosome"/>
</dbReference>
<dbReference type="Gene3D" id="3.10.450.50">
    <property type="match status" value="1"/>
</dbReference>
<dbReference type="HAMAP" id="MF_00612">
    <property type="entry name" value="UPF0225"/>
    <property type="match status" value="1"/>
</dbReference>
<dbReference type="InterPro" id="IPR032710">
    <property type="entry name" value="NTF2-like_dom_sf"/>
</dbReference>
<dbReference type="InterPro" id="IPR023006">
    <property type="entry name" value="UPF0225"/>
</dbReference>
<dbReference type="InterPro" id="IPR048469">
    <property type="entry name" value="YchJ-like_M"/>
</dbReference>
<dbReference type="PANTHER" id="PTHR33747:SF1">
    <property type="entry name" value="ADENYLATE CYCLASE-ASSOCIATED CAP C-TERMINAL DOMAIN-CONTAINING PROTEIN"/>
    <property type="match status" value="1"/>
</dbReference>
<dbReference type="PANTHER" id="PTHR33747">
    <property type="entry name" value="UPF0225 PROTEIN SCO1677"/>
    <property type="match status" value="1"/>
</dbReference>
<dbReference type="Pfam" id="PF17775">
    <property type="entry name" value="YchJ_M-like"/>
    <property type="match status" value="1"/>
</dbReference>
<dbReference type="SUPFAM" id="SSF54427">
    <property type="entry name" value="NTF2-like"/>
    <property type="match status" value="1"/>
</dbReference>
<protein>
    <recommendedName>
        <fullName evidence="1">UPF0225 protein SCO1677</fullName>
    </recommendedName>
</protein>
<comment type="similarity">
    <text evidence="1">Belongs to the UPF0225 family.</text>
</comment>
<proteinExistence type="inferred from homology"/>
<accession>Q9AD90</accession>
<name>Y1677_STRCO</name>
<keyword id="KW-1185">Reference proteome</keyword>
<sequence>MPTPPCPCGRSESYEKCCGRFHGGTAAAPTAEALMRSRYCAFVQGDASYLLRTWHPRTRPARLDLDPGMRWTGLEILDTADGSAFHTTGTVTFRASYRGGSLHERSRFERVDGAWVYADGEFLD</sequence>
<gene>
    <name type="ordered locus">SCO1677</name>
    <name type="ORF">SCI52.19</name>
</gene>
<feature type="chain" id="PRO_0000071817" description="UPF0225 protein SCO1677">
    <location>
        <begin position="1"/>
        <end position="124"/>
    </location>
</feature>